<proteinExistence type="inferred from homology"/>
<protein>
    <recommendedName>
        <fullName>Period circadian protein</fullName>
    </recommendedName>
</protein>
<organism>
    <name type="scientific">Drosophila sucinea</name>
    <name type="common">Fruit fly</name>
    <dbReference type="NCBI Taxonomy" id="46791"/>
    <lineage>
        <taxon>Eukaryota</taxon>
        <taxon>Metazoa</taxon>
        <taxon>Ecdysozoa</taxon>
        <taxon>Arthropoda</taxon>
        <taxon>Hexapoda</taxon>
        <taxon>Insecta</taxon>
        <taxon>Pterygota</taxon>
        <taxon>Neoptera</taxon>
        <taxon>Endopterygota</taxon>
        <taxon>Diptera</taxon>
        <taxon>Brachycera</taxon>
        <taxon>Muscomorpha</taxon>
        <taxon>Ephydroidea</taxon>
        <taxon>Drosophilidae</taxon>
        <taxon>Drosophila</taxon>
        <taxon>Sophophora</taxon>
    </lineage>
</organism>
<reference key="1">
    <citation type="journal article" date="1997" name="Mol. Biol. Evol.">
        <title>Interspecific and intraspecific comparisons of the period locus in the Drosophila willistoni sibling species.</title>
        <authorList>
            <person name="Gleason J.M."/>
            <person name="Powell J.R."/>
        </authorList>
    </citation>
    <scope>NUCLEOTIDE SEQUENCE [GENOMIC DNA]</scope>
    <source>
        <strain>0791.3</strain>
    </source>
</reference>
<dbReference type="EMBL" id="U51091">
    <property type="protein sequence ID" value="AAB41394.1"/>
    <property type="molecule type" value="Genomic_DNA"/>
</dbReference>
<dbReference type="SMR" id="P91705"/>
<dbReference type="GO" id="GO:0005634">
    <property type="term" value="C:nucleus"/>
    <property type="evidence" value="ECO:0007669"/>
    <property type="project" value="UniProtKB-SubCell"/>
</dbReference>
<dbReference type="GO" id="GO:0048471">
    <property type="term" value="C:perinuclear region of cytoplasm"/>
    <property type="evidence" value="ECO:0007669"/>
    <property type="project" value="UniProtKB-SubCell"/>
</dbReference>
<dbReference type="GO" id="GO:0000976">
    <property type="term" value="F:transcription cis-regulatory region binding"/>
    <property type="evidence" value="ECO:0007669"/>
    <property type="project" value="TreeGrafter"/>
</dbReference>
<dbReference type="GO" id="GO:0001222">
    <property type="term" value="F:transcription corepressor binding"/>
    <property type="evidence" value="ECO:0007669"/>
    <property type="project" value="TreeGrafter"/>
</dbReference>
<dbReference type="GO" id="GO:0032922">
    <property type="term" value="P:circadian regulation of gene expression"/>
    <property type="evidence" value="ECO:0007669"/>
    <property type="project" value="TreeGrafter"/>
</dbReference>
<dbReference type="GO" id="GO:0043153">
    <property type="term" value="P:entrainment of circadian clock by photoperiod"/>
    <property type="evidence" value="ECO:0007669"/>
    <property type="project" value="TreeGrafter"/>
</dbReference>
<dbReference type="GO" id="GO:0000122">
    <property type="term" value="P:negative regulation of transcription by RNA polymerase II"/>
    <property type="evidence" value="ECO:0007669"/>
    <property type="project" value="TreeGrafter"/>
</dbReference>
<dbReference type="InterPro" id="IPR050760">
    <property type="entry name" value="Period_circadian_regulator"/>
</dbReference>
<dbReference type="PANTHER" id="PTHR11269">
    <property type="entry name" value="PERIOD CIRCADIAN PROTEIN"/>
    <property type="match status" value="1"/>
</dbReference>
<dbReference type="PANTHER" id="PTHR11269:SF16">
    <property type="entry name" value="PERIOD CIRCADIAN PROTEIN"/>
    <property type="match status" value="1"/>
</dbReference>
<name>PER_DROSC</name>
<accession>P91705</accession>
<feature type="chain" id="PRO_0000162607" description="Period circadian protein">
    <location>
        <begin position="1" status="less than"/>
        <end position="375" status="greater than"/>
    </location>
</feature>
<feature type="region of interest" description="Disordered" evidence="2">
    <location>
        <begin position="27"/>
        <end position="119"/>
    </location>
</feature>
<feature type="region of interest" description="Disordered" evidence="2">
    <location>
        <begin position="140"/>
        <end position="189"/>
    </location>
</feature>
<feature type="region of interest" description="Disordered" evidence="2">
    <location>
        <begin position="219"/>
        <end position="255"/>
    </location>
</feature>
<feature type="compositionally biased region" description="Low complexity" evidence="2">
    <location>
        <begin position="69"/>
        <end position="91"/>
    </location>
</feature>
<feature type="compositionally biased region" description="Gly residues" evidence="2">
    <location>
        <begin position="92"/>
        <end position="113"/>
    </location>
</feature>
<feature type="compositionally biased region" description="Basic and acidic residues" evidence="2">
    <location>
        <begin position="145"/>
        <end position="156"/>
    </location>
</feature>
<feature type="compositionally biased region" description="Gly residues" evidence="2">
    <location>
        <begin position="224"/>
        <end position="243"/>
    </location>
</feature>
<feature type="compositionally biased region" description="Polar residues" evidence="2">
    <location>
        <begin position="245"/>
        <end position="255"/>
    </location>
</feature>
<feature type="non-terminal residue">
    <location>
        <position position="1"/>
    </location>
</feature>
<feature type="non-terminal residue">
    <location>
        <position position="375"/>
    </location>
</feature>
<evidence type="ECO:0000250" key="1"/>
<evidence type="ECO:0000256" key="2">
    <source>
        <dbReference type="SAM" id="MobiDB-lite"/>
    </source>
</evidence>
<sequence>SSTETPPSYNQLNYNENLLRFFNSKPVTAPVELDPPKVEPSYVSSAREDARSTLSPVQGFEGSGGTGSSGNFTTGSNLHMSSVTNTSNAGTGTSGTGNSGGGGGGGGGAGPGNGAVPPVTLTESLLNKHNDEMEKFMLKKHRESRGRSGEKNKKSANDTLKMVEYSGPGPGPGHGHGIKRGGSHSWEGEANKPKQLLTLNTGGMPPLLDIHTSSASLSKCQASGAGGGGSGSVGGTGNIGSGGSNAQPSTNQYTQSGLSCTQNINLWPPFSVGITTPTSVLSTHTAVAQSSFSTQHNLFPTFYYIPASIAASSPSGTSPNPRPHKHTLVHKSAEQPSTSQAAAATMPLQYMTGLMYPHPSLFYTHPAAAAATAMV</sequence>
<gene>
    <name type="primary">per</name>
</gene>
<comment type="function">
    <text evidence="1">Essential for biological clock functions. Determines the period length of circadian and ultradian rhythms; an increase in PER dosage leads to shortened circadian rhythms and a decrease leads to lengthened circadian rhythms. Essential for the circadian rhythmicity of locomotor activity, eclosion behavior, and for the rhythmic component of the male courtship song that originates in the thoracic nervous system. The biological cycle depends on the rhythmic formation and nuclear localization of the TIM-PER complex. Light induces the degradation of TIM, which promotes elimination of PER. Nuclear activity of the heterodimer coordinatively regulates PER and TIM transcription through a negative feedback loop. Behaves as a negative element in circadian transcriptional loop. Does not appear to bind DNA, suggesting indirect transcriptional inhibition (By similarity).</text>
</comment>
<comment type="subunit">
    <text evidence="1">Forms a heterodimer with timeless (TIM); the complex then translocates into the nucleus.</text>
</comment>
<comment type="subcellular location">
    <subcellularLocation>
        <location evidence="1">Nucleus</location>
    </subcellularLocation>
    <subcellularLocation>
        <location evidence="1">Cytoplasm</location>
        <location evidence="1">Perinuclear region</location>
    </subcellularLocation>
    <text evidence="1">Nuclear at specific periods of the day. First accumulates in the perinuclear region about one hour before translocation into the nucleus. Interaction with Tim is required for nuclear localization (By similarity).</text>
</comment>
<comment type="PTM">
    <text evidence="1">Phosphorylated with a circadian rhythmicity, probably by the double-time protein (dbt). Phosphorylation could be implicated in the stability of per monomer and in the formation of heterodimer per-tim (By similarity).</text>
</comment>
<keyword id="KW-0090">Biological rhythms</keyword>
<keyword id="KW-0963">Cytoplasm</keyword>
<keyword id="KW-0539">Nucleus</keyword>
<keyword id="KW-0597">Phosphoprotein</keyword>
<keyword id="KW-0677">Repeat</keyword>